<comment type="function">
    <text evidence="1">Catalyzes the interconversion of 2-phosphoglycerate and 3-phosphoglycerate.</text>
</comment>
<comment type="catalytic activity">
    <reaction evidence="1">
        <text>(2R)-2-phosphoglycerate = (2R)-3-phosphoglycerate</text>
        <dbReference type="Rhea" id="RHEA:15901"/>
        <dbReference type="ChEBI" id="CHEBI:58272"/>
        <dbReference type="ChEBI" id="CHEBI:58289"/>
        <dbReference type="EC" id="5.4.2.11"/>
    </reaction>
</comment>
<comment type="pathway">
    <text evidence="1">Carbohydrate degradation; glycolysis; pyruvate from D-glyceraldehyde 3-phosphate: step 3/5.</text>
</comment>
<comment type="subunit">
    <text evidence="1">Homodimer.</text>
</comment>
<comment type="similarity">
    <text evidence="1">Belongs to the phosphoglycerate mutase family. BPG-dependent PGAM subfamily.</text>
</comment>
<dbReference type="EC" id="5.4.2.11" evidence="1"/>
<dbReference type="EMBL" id="AE017143">
    <property type="protein sequence ID" value="AAP96431.1"/>
    <property type="molecule type" value="Genomic_DNA"/>
</dbReference>
<dbReference type="RefSeq" id="WP_010945463.1">
    <property type="nucleotide sequence ID" value="NC_002940.2"/>
</dbReference>
<dbReference type="SMR" id="Q7VL28"/>
<dbReference type="STRING" id="233412.HD_1659"/>
<dbReference type="KEGG" id="hdu:HD_1659"/>
<dbReference type="eggNOG" id="COG0588">
    <property type="taxonomic scope" value="Bacteria"/>
</dbReference>
<dbReference type="HOGENOM" id="CLU_033323_1_5_6"/>
<dbReference type="OrthoDB" id="9781415at2"/>
<dbReference type="UniPathway" id="UPA00109">
    <property type="reaction ID" value="UER00186"/>
</dbReference>
<dbReference type="Proteomes" id="UP000001022">
    <property type="component" value="Chromosome"/>
</dbReference>
<dbReference type="GO" id="GO:0004619">
    <property type="term" value="F:phosphoglycerate mutase activity"/>
    <property type="evidence" value="ECO:0007669"/>
    <property type="project" value="UniProtKB-EC"/>
</dbReference>
<dbReference type="GO" id="GO:0006094">
    <property type="term" value="P:gluconeogenesis"/>
    <property type="evidence" value="ECO:0007669"/>
    <property type="project" value="UniProtKB-UniRule"/>
</dbReference>
<dbReference type="GO" id="GO:0006096">
    <property type="term" value="P:glycolytic process"/>
    <property type="evidence" value="ECO:0007669"/>
    <property type="project" value="UniProtKB-UniRule"/>
</dbReference>
<dbReference type="CDD" id="cd07067">
    <property type="entry name" value="HP_PGM_like"/>
    <property type="match status" value="1"/>
</dbReference>
<dbReference type="FunFam" id="3.40.50.1240:FF:000003">
    <property type="entry name" value="2,3-bisphosphoglycerate-dependent phosphoglycerate mutase"/>
    <property type="match status" value="1"/>
</dbReference>
<dbReference type="Gene3D" id="3.40.50.1240">
    <property type="entry name" value="Phosphoglycerate mutase-like"/>
    <property type="match status" value="1"/>
</dbReference>
<dbReference type="HAMAP" id="MF_01039">
    <property type="entry name" value="PGAM_GpmA"/>
    <property type="match status" value="1"/>
</dbReference>
<dbReference type="InterPro" id="IPR013078">
    <property type="entry name" value="His_Pase_superF_clade-1"/>
</dbReference>
<dbReference type="InterPro" id="IPR029033">
    <property type="entry name" value="His_PPase_superfam"/>
</dbReference>
<dbReference type="InterPro" id="IPR005952">
    <property type="entry name" value="Phosphogly_mut1"/>
</dbReference>
<dbReference type="NCBIfam" id="TIGR01258">
    <property type="entry name" value="pgm_1"/>
    <property type="match status" value="1"/>
</dbReference>
<dbReference type="NCBIfam" id="NF010713">
    <property type="entry name" value="PRK14115.1"/>
    <property type="match status" value="1"/>
</dbReference>
<dbReference type="NCBIfam" id="NF010716">
    <property type="entry name" value="PRK14118.1"/>
    <property type="match status" value="1"/>
</dbReference>
<dbReference type="PANTHER" id="PTHR11931">
    <property type="entry name" value="PHOSPHOGLYCERATE MUTASE"/>
    <property type="match status" value="1"/>
</dbReference>
<dbReference type="Pfam" id="PF00300">
    <property type="entry name" value="His_Phos_1"/>
    <property type="match status" value="2"/>
</dbReference>
<dbReference type="PIRSF" id="PIRSF000709">
    <property type="entry name" value="6PFK_2-Ptase"/>
    <property type="match status" value="1"/>
</dbReference>
<dbReference type="SMART" id="SM00855">
    <property type="entry name" value="PGAM"/>
    <property type="match status" value="1"/>
</dbReference>
<dbReference type="SUPFAM" id="SSF53254">
    <property type="entry name" value="Phosphoglycerate mutase-like"/>
    <property type="match status" value="1"/>
</dbReference>
<reference key="1">
    <citation type="submission" date="2003-06" db="EMBL/GenBank/DDBJ databases">
        <title>The complete genome sequence of Haemophilus ducreyi.</title>
        <authorList>
            <person name="Munson R.S. Jr."/>
            <person name="Ray W.C."/>
            <person name="Mahairas G."/>
            <person name="Sabo P."/>
            <person name="Mungur R."/>
            <person name="Johnson L."/>
            <person name="Nguyen D."/>
            <person name="Wang J."/>
            <person name="Forst C."/>
            <person name="Hood L."/>
        </authorList>
    </citation>
    <scope>NUCLEOTIDE SEQUENCE [LARGE SCALE GENOMIC DNA]</scope>
    <source>
        <strain>35000HP / ATCC 700724</strain>
    </source>
</reference>
<proteinExistence type="inferred from homology"/>
<accession>Q7VL28</accession>
<protein>
    <recommendedName>
        <fullName evidence="1">2,3-bisphosphoglycerate-dependent phosphoglycerate mutase</fullName>
        <shortName evidence="1">BPG-dependent PGAM</shortName>
        <shortName evidence="1">PGAM</shortName>
        <shortName evidence="1">Phosphoglyceromutase</shortName>
        <shortName evidence="1">dPGM</shortName>
        <ecNumber evidence="1">5.4.2.11</ecNumber>
    </recommendedName>
</protein>
<feature type="chain" id="PRO_0000179881" description="2,3-bisphosphoglycerate-dependent phosphoglycerate mutase">
    <location>
        <begin position="1"/>
        <end position="227"/>
    </location>
</feature>
<feature type="active site" description="Tele-phosphohistidine intermediate" evidence="1">
    <location>
        <position position="8"/>
    </location>
</feature>
<feature type="active site" description="Proton donor/acceptor" evidence="1">
    <location>
        <position position="86"/>
    </location>
</feature>
<feature type="binding site" evidence="1">
    <location>
        <begin position="7"/>
        <end position="14"/>
    </location>
    <ligand>
        <name>substrate</name>
    </ligand>
</feature>
<feature type="binding site" evidence="1">
    <location>
        <begin position="20"/>
        <end position="21"/>
    </location>
    <ligand>
        <name>substrate</name>
    </ligand>
</feature>
<feature type="binding site" evidence="1">
    <location>
        <position position="59"/>
    </location>
    <ligand>
        <name>substrate</name>
    </ligand>
</feature>
<feature type="binding site" evidence="1">
    <location>
        <begin position="86"/>
        <end position="89"/>
    </location>
    <ligand>
        <name>substrate</name>
    </ligand>
</feature>
<feature type="binding site" evidence="1">
    <location>
        <position position="97"/>
    </location>
    <ligand>
        <name>substrate</name>
    </ligand>
</feature>
<feature type="binding site" evidence="1">
    <location>
        <begin position="113"/>
        <end position="114"/>
    </location>
    <ligand>
        <name>substrate</name>
    </ligand>
</feature>
<feature type="binding site" evidence="1">
    <location>
        <begin position="182"/>
        <end position="183"/>
    </location>
    <ligand>
        <name>substrate</name>
    </ligand>
</feature>
<feature type="site" description="Transition state stabilizer" evidence="1">
    <location>
        <position position="181"/>
    </location>
</feature>
<evidence type="ECO:0000255" key="1">
    <source>
        <dbReference type="HAMAP-Rule" id="MF_01039"/>
    </source>
</evidence>
<name>GPMA_HAEDU</name>
<keyword id="KW-0312">Gluconeogenesis</keyword>
<keyword id="KW-0324">Glycolysis</keyword>
<keyword id="KW-0413">Isomerase</keyword>
<keyword id="KW-1185">Reference proteome</keyword>
<gene>
    <name evidence="1" type="primary">gpmA</name>
    <name type="ordered locus">HD_1659</name>
</gene>
<organism>
    <name type="scientific">Haemophilus ducreyi (strain 35000HP / ATCC 700724)</name>
    <dbReference type="NCBI Taxonomy" id="233412"/>
    <lineage>
        <taxon>Bacteria</taxon>
        <taxon>Pseudomonadati</taxon>
        <taxon>Pseudomonadota</taxon>
        <taxon>Gammaproteobacteria</taxon>
        <taxon>Pasteurellales</taxon>
        <taxon>Pasteurellaceae</taxon>
        <taxon>Haemophilus</taxon>
    </lineage>
</organism>
<sequence length="227" mass="25910">MELVFIRHGFSEWNAKNLFTGWRDVNLTERGVEEAKAAGQKLLAAGYEFDIAFTSVLTRAIKTCNIVLEESNQLWIPQVKHWRLNERHYGELQGLDKKATAEKYGDEQVHIWRRSYDTLPPLLAPSDPNSAHNDRRYAHLPKEVVPNGENLKVTLERVLPFWEDQIAPALLSGKRVLVTAHGNSLRALAKHIIGISDAEIMDFEIPTGQPLVLKLDSKLNFIEKFYL</sequence>